<gene>
    <name evidence="1" type="primary">trmFO</name>
    <name type="ordered locus">Swol_0841</name>
</gene>
<organism>
    <name type="scientific">Syntrophomonas wolfei subsp. wolfei (strain DSM 2245B / Goettingen)</name>
    <dbReference type="NCBI Taxonomy" id="335541"/>
    <lineage>
        <taxon>Bacteria</taxon>
        <taxon>Bacillati</taxon>
        <taxon>Bacillota</taxon>
        <taxon>Clostridia</taxon>
        <taxon>Eubacteriales</taxon>
        <taxon>Syntrophomonadaceae</taxon>
        <taxon>Syntrophomonas</taxon>
    </lineage>
</organism>
<proteinExistence type="inferred from homology"/>
<reference key="1">
    <citation type="journal article" date="2010" name="Environ. Microbiol.">
        <title>The genome of Syntrophomonas wolfei: new insights into syntrophic metabolism and biohydrogen production.</title>
        <authorList>
            <person name="Sieber J.R."/>
            <person name="Sims D.R."/>
            <person name="Han C."/>
            <person name="Kim E."/>
            <person name="Lykidis A."/>
            <person name="Lapidus A.L."/>
            <person name="McDonnald E."/>
            <person name="Rohlin L."/>
            <person name="Culley D.E."/>
            <person name="Gunsalus R."/>
            <person name="McInerney M.J."/>
        </authorList>
    </citation>
    <scope>NUCLEOTIDE SEQUENCE [LARGE SCALE GENOMIC DNA]</scope>
    <source>
        <strain>DSM 2245B / Goettingen</strain>
    </source>
</reference>
<evidence type="ECO:0000255" key="1">
    <source>
        <dbReference type="HAMAP-Rule" id="MF_01037"/>
    </source>
</evidence>
<sequence>MQQVNVIGGGLAGCEAAYYLAQKGIRVRLWEMRPQKATAVHRTADLGELVCSNSLKSDQPNTAQGLLKREMRILGSLLLSCAEKARVPAGSALAVDRELFAGLVSQAILACPSIELCREEVNRVPTGELSIVASGPLTSEALAADLRRITGEENLFFYDAVAPSISADSLDMNKIFRASRYGKGSADYLNCPLDREEYESFYENLINADIKAGHSIDKSLFFNACMPAEVIARRGKDALRYGPMRPVGLEIPGSSKRAYAVLQLRQEDKAGTIYGMVGFQTRMRWGEQERIFRLIPGLEQAEFVRYGVMHRNTYINSPKLLWPSLQCKKRPEIFFAGQITGVEGYMESAATGIIAGINAARWLQGKALLTPHKATIIGALLDFISSSSSQDFQPMNANFGLLPPMEPPIKDKAKRYLAYVERALNKMGEFSESLLN</sequence>
<accession>Q0AYP4</accession>
<comment type="function">
    <text evidence="1">Catalyzes the folate-dependent formation of 5-methyl-uridine at position 54 (M-5-U54) in all tRNAs.</text>
</comment>
<comment type="catalytic activity">
    <reaction evidence="1">
        <text>uridine(54) in tRNA + (6R)-5,10-methylene-5,6,7,8-tetrahydrofolate + NADH + H(+) = 5-methyluridine(54) in tRNA + (6S)-5,6,7,8-tetrahydrofolate + NAD(+)</text>
        <dbReference type="Rhea" id="RHEA:16873"/>
        <dbReference type="Rhea" id="RHEA-COMP:10167"/>
        <dbReference type="Rhea" id="RHEA-COMP:10193"/>
        <dbReference type="ChEBI" id="CHEBI:15378"/>
        <dbReference type="ChEBI" id="CHEBI:15636"/>
        <dbReference type="ChEBI" id="CHEBI:57453"/>
        <dbReference type="ChEBI" id="CHEBI:57540"/>
        <dbReference type="ChEBI" id="CHEBI:57945"/>
        <dbReference type="ChEBI" id="CHEBI:65315"/>
        <dbReference type="ChEBI" id="CHEBI:74447"/>
        <dbReference type="EC" id="2.1.1.74"/>
    </reaction>
</comment>
<comment type="catalytic activity">
    <reaction evidence="1">
        <text>uridine(54) in tRNA + (6R)-5,10-methylene-5,6,7,8-tetrahydrofolate + NADPH + H(+) = 5-methyluridine(54) in tRNA + (6S)-5,6,7,8-tetrahydrofolate + NADP(+)</text>
        <dbReference type="Rhea" id="RHEA:62372"/>
        <dbReference type="Rhea" id="RHEA-COMP:10167"/>
        <dbReference type="Rhea" id="RHEA-COMP:10193"/>
        <dbReference type="ChEBI" id="CHEBI:15378"/>
        <dbReference type="ChEBI" id="CHEBI:15636"/>
        <dbReference type="ChEBI" id="CHEBI:57453"/>
        <dbReference type="ChEBI" id="CHEBI:57783"/>
        <dbReference type="ChEBI" id="CHEBI:58349"/>
        <dbReference type="ChEBI" id="CHEBI:65315"/>
        <dbReference type="ChEBI" id="CHEBI:74447"/>
        <dbReference type="EC" id="2.1.1.74"/>
    </reaction>
</comment>
<comment type="cofactor">
    <cofactor evidence="1">
        <name>FAD</name>
        <dbReference type="ChEBI" id="CHEBI:57692"/>
    </cofactor>
</comment>
<comment type="subcellular location">
    <subcellularLocation>
        <location evidence="1">Cytoplasm</location>
    </subcellularLocation>
</comment>
<comment type="similarity">
    <text evidence="1">Belongs to the MnmG family. TrmFO subfamily.</text>
</comment>
<protein>
    <recommendedName>
        <fullName evidence="1">Methylenetetrahydrofolate--tRNA-(uracil-5-)-methyltransferase TrmFO</fullName>
        <ecNumber evidence="1">2.1.1.74</ecNumber>
    </recommendedName>
    <alternativeName>
        <fullName evidence="1">Folate-dependent tRNA (uracil-5-)-methyltransferase</fullName>
    </alternativeName>
    <alternativeName>
        <fullName evidence="1">Folate-dependent tRNA(M-5-U54)-methyltransferase</fullName>
    </alternativeName>
</protein>
<dbReference type="EC" id="2.1.1.74" evidence="1"/>
<dbReference type="EMBL" id="CP000448">
    <property type="protein sequence ID" value="ABI68160.1"/>
    <property type="molecule type" value="Genomic_DNA"/>
</dbReference>
<dbReference type="RefSeq" id="WP_011640265.1">
    <property type="nucleotide sequence ID" value="NC_008346.1"/>
</dbReference>
<dbReference type="SMR" id="Q0AYP4"/>
<dbReference type="STRING" id="335541.Swol_0841"/>
<dbReference type="KEGG" id="swo:Swol_0841"/>
<dbReference type="eggNOG" id="COG1206">
    <property type="taxonomic scope" value="Bacteria"/>
</dbReference>
<dbReference type="HOGENOM" id="CLU_033057_1_0_9"/>
<dbReference type="OrthoDB" id="9803114at2"/>
<dbReference type="Proteomes" id="UP000001968">
    <property type="component" value="Chromosome"/>
</dbReference>
<dbReference type="GO" id="GO:0005829">
    <property type="term" value="C:cytosol"/>
    <property type="evidence" value="ECO:0007669"/>
    <property type="project" value="TreeGrafter"/>
</dbReference>
<dbReference type="GO" id="GO:0050660">
    <property type="term" value="F:flavin adenine dinucleotide binding"/>
    <property type="evidence" value="ECO:0007669"/>
    <property type="project" value="UniProtKB-UniRule"/>
</dbReference>
<dbReference type="GO" id="GO:0047151">
    <property type="term" value="F:tRNA (uracil(54)-C5)-methyltransferase activity, 5,10-methylenetetrahydrofolate-dependent"/>
    <property type="evidence" value="ECO:0007669"/>
    <property type="project" value="UniProtKB-UniRule"/>
</dbReference>
<dbReference type="GO" id="GO:0030488">
    <property type="term" value="P:tRNA methylation"/>
    <property type="evidence" value="ECO:0007669"/>
    <property type="project" value="TreeGrafter"/>
</dbReference>
<dbReference type="GO" id="GO:0002098">
    <property type="term" value="P:tRNA wobble uridine modification"/>
    <property type="evidence" value="ECO:0007669"/>
    <property type="project" value="TreeGrafter"/>
</dbReference>
<dbReference type="FunFam" id="3.50.50.60:FF:000035">
    <property type="entry name" value="Methylenetetrahydrofolate--tRNA-(uracil-5-)-methyltransferase TrmFO"/>
    <property type="match status" value="1"/>
</dbReference>
<dbReference type="Gene3D" id="3.50.50.60">
    <property type="entry name" value="FAD/NAD(P)-binding domain"/>
    <property type="match status" value="2"/>
</dbReference>
<dbReference type="HAMAP" id="MF_01037">
    <property type="entry name" value="TrmFO"/>
    <property type="match status" value="1"/>
</dbReference>
<dbReference type="InterPro" id="IPR036188">
    <property type="entry name" value="FAD/NAD-bd_sf"/>
</dbReference>
<dbReference type="InterPro" id="IPR002218">
    <property type="entry name" value="MnmG-rel"/>
</dbReference>
<dbReference type="InterPro" id="IPR020595">
    <property type="entry name" value="MnmG-rel_CS"/>
</dbReference>
<dbReference type="InterPro" id="IPR040131">
    <property type="entry name" value="MnmG_N"/>
</dbReference>
<dbReference type="InterPro" id="IPR004417">
    <property type="entry name" value="TrmFO"/>
</dbReference>
<dbReference type="NCBIfam" id="TIGR00137">
    <property type="entry name" value="gid_trmFO"/>
    <property type="match status" value="1"/>
</dbReference>
<dbReference type="NCBIfam" id="NF003739">
    <property type="entry name" value="PRK05335.1"/>
    <property type="match status" value="1"/>
</dbReference>
<dbReference type="PANTHER" id="PTHR11806">
    <property type="entry name" value="GLUCOSE INHIBITED DIVISION PROTEIN A"/>
    <property type="match status" value="1"/>
</dbReference>
<dbReference type="PANTHER" id="PTHR11806:SF2">
    <property type="entry name" value="METHYLENETETRAHYDROFOLATE--TRNA-(URACIL-5-)-METHYLTRANSFERASE TRMFO"/>
    <property type="match status" value="1"/>
</dbReference>
<dbReference type="Pfam" id="PF01134">
    <property type="entry name" value="GIDA"/>
    <property type="match status" value="1"/>
</dbReference>
<dbReference type="SUPFAM" id="SSF51905">
    <property type="entry name" value="FAD/NAD(P)-binding domain"/>
    <property type="match status" value="1"/>
</dbReference>
<dbReference type="PROSITE" id="PS01281">
    <property type="entry name" value="GIDA_2"/>
    <property type="match status" value="1"/>
</dbReference>
<keyword id="KW-0963">Cytoplasm</keyword>
<keyword id="KW-0274">FAD</keyword>
<keyword id="KW-0285">Flavoprotein</keyword>
<keyword id="KW-0489">Methyltransferase</keyword>
<keyword id="KW-0520">NAD</keyword>
<keyword id="KW-0521">NADP</keyword>
<keyword id="KW-1185">Reference proteome</keyword>
<keyword id="KW-0808">Transferase</keyword>
<keyword id="KW-0819">tRNA processing</keyword>
<feature type="chain" id="PRO_0000346413" description="Methylenetetrahydrofolate--tRNA-(uracil-5-)-methyltransferase TrmFO">
    <location>
        <begin position="1"/>
        <end position="436"/>
    </location>
</feature>
<feature type="binding site" evidence="1">
    <location>
        <begin position="8"/>
        <end position="13"/>
    </location>
    <ligand>
        <name>FAD</name>
        <dbReference type="ChEBI" id="CHEBI:57692"/>
    </ligand>
</feature>
<name>TRMFO_SYNWW</name>